<gene>
    <name evidence="1" type="primary">fni</name>
    <name type="ordered locus">Lm4b_01392</name>
</gene>
<protein>
    <recommendedName>
        <fullName evidence="1">Isopentenyl-diphosphate delta-isomerase</fullName>
        <shortName evidence="1">IPP isomerase</shortName>
        <ecNumber evidence="1">5.3.3.2</ecNumber>
    </recommendedName>
    <alternativeName>
        <fullName evidence="1">Isopentenyl diphosphate:dimethylallyl diphosphate isomerase</fullName>
    </alternativeName>
    <alternativeName>
        <fullName evidence="1">Isopentenyl pyrophosphate isomerase</fullName>
    </alternativeName>
    <alternativeName>
        <fullName evidence="1">Type 2 isopentenyl diphosphate isomerase</fullName>
        <shortName evidence="1">IDI-2</shortName>
    </alternativeName>
</protein>
<reference key="1">
    <citation type="journal article" date="2012" name="BMC Genomics">
        <title>Comparative genomics and transcriptomics of lineages I, II, and III strains of Listeria monocytogenes.</title>
        <authorList>
            <person name="Hain T."/>
            <person name="Ghai R."/>
            <person name="Billion A."/>
            <person name="Kuenne C.T."/>
            <person name="Steinweg C."/>
            <person name="Izar B."/>
            <person name="Mohamed W."/>
            <person name="Mraheil M."/>
            <person name="Domann E."/>
            <person name="Schaffrath S."/>
            <person name="Karst U."/>
            <person name="Goesmann A."/>
            <person name="Oehm S."/>
            <person name="Puhler A."/>
            <person name="Merkl R."/>
            <person name="Vorwerk S."/>
            <person name="Glaser P."/>
            <person name="Garrido P."/>
            <person name="Rusniok C."/>
            <person name="Buchrieser C."/>
            <person name="Goebel W."/>
            <person name="Chakraborty T."/>
        </authorList>
    </citation>
    <scope>NUCLEOTIDE SEQUENCE [LARGE SCALE GENOMIC DNA]</scope>
    <source>
        <strain>CLIP80459</strain>
    </source>
</reference>
<name>IDI2_LISMC</name>
<organism>
    <name type="scientific">Listeria monocytogenes serotype 4b (strain CLIP80459)</name>
    <dbReference type="NCBI Taxonomy" id="568819"/>
    <lineage>
        <taxon>Bacteria</taxon>
        <taxon>Bacillati</taxon>
        <taxon>Bacillota</taxon>
        <taxon>Bacilli</taxon>
        <taxon>Bacillales</taxon>
        <taxon>Listeriaceae</taxon>
        <taxon>Listeria</taxon>
    </lineage>
</organism>
<evidence type="ECO:0000255" key="1">
    <source>
        <dbReference type="HAMAP-Rule" id="MF_00354"/>
    </source>
</evidence>
<keyword id="KW-0963">Cytoplasm</keyword>
<keyword id="KW-0285">Flavoprotein</keyword>
<keyword id="KW-0288">FMN</keyword>
<keyword id="KW-0413">Isomerase</keyword>
<keyword id="KW-0414">Isoprene biosynthesis</keyword>
<keyword id="KW-0460">Magnesium</keyword>
<keyword id="KW-0479">Metal-binding</keyword>
<keyword id="KW-0521">NADP</keyword>
<comment type="function">
    <text evidence="1">Involved in the biosynthesis of isoprenoids. Catalyzes the 1,3-allylic rearrangement of the homoallylic substrate isopentenyl (IPP) to its allylic isomer, dimethylallyl diphosphate (DMAPP).</text>
</comment>
<comment type="catalytic activity">
    <reaction evidence="1">
        <text>isopentenyl diphosphate = dimethylallyl diphosphate</text>
        <dbReference type="Rhea" id="RHEA:23284"/>
        <dbReference type="ChEBI" id="CHEBI:57623"/>
        <dbReference type="ChEBI" id="CHEBI:128769"/>
        <dbReference type="EC" id="5.3.3.2"/>
    </reaction>
</comment>
<comment type="cofactor">
    <cofactor evidence="1">
        <name>FMN</name>
        <dbReference type="ChEBI" id="CHEBI:58210"/>
    </cofactor>
</comment>
<comment type="cofactor">
    <cofactor evidence="1">
        <name>NADPH</name>
        <dbReference type="ChEBI" id="CHEBI:57783"/>
    </cofactor>
</comment>
<comment type="cofactor">
    <cofactor evidence="1">
        <name>Mg(2+)</name>
        <dbReference type="ChEBI" id="CHEBI:18420"/>
    </cofactor>
</comment>
<comment type="subunit">
    <text evidence="1">Homooctamer. Dimer of tetramers.</text>
</comment>
<comment type="subcellular location">
    <subcellularLocation>
        <location evidence="1">Cytoplasm</location>
    </subcellularLocation>
</comment>
<comment type="similarity">
    <text evidence="1">Belongs to the IPP isomerase type 2 family.</text>
</comment>
<sequence length="358" mass="39396">MQKNDDLLRERRKDEHVALGVKQNEQLAPSSLEDIQLIGTSIPRYNVKDIDLTTTIVGTNVPFPLYINAMTGGSRHTKKINAELAEIAREAAIPMAVGSQSAALKNSSLIDTYKIVREINPNGMILANISPEVALQEGLRAIEMLEANALQIHINPAQELVMQEGDRSFSHWLTRIEEYVKLSPVPVVVKEVGFGMTRETVKTLADIGVQTVDLAGKGGTNFAQIENDRRRDQAYDFLLDWGISTGQALIDMQHQDAPKIAYLASGGIRNPLDIVKALALGADSVGMAGQIIYSLKKEGVTKTIEKLELWKEQLRGLFVLANAKNISELKTTPLIISGELAKWGALREIDLVKLANRK</sequence>
<dbReference type="EC" id="5.3.3.2" evidence="1"/>
<dbReference type="EMBL" id="FM242711">
    <property type="protein sequence ID" value="CAS05155.1"/>
    <property type="molecule type" value="Genomic_DNA"/>
</dbReference>
<dbReference type="RefSeq" id="WP_012681285.1">
    <property type="nucleotide sequence ID" value="NC_012488.1"/>
</dbReference>
<dbReference type="SMR" id="C1L2T9"/>
<dbReference type="KEGG" id="lmc:Lm4b_01392"/>
<dbReference type="HOGENOM" id="CLU_065515_0_0_9"/>
<dbReference type="GO" id="GO:0005737">
    <property type="term" value="C:cytoplasm"/>
    <property type="evidence" value="ECO:0007669"/>
    <property type="project" value="UniProtKB-SubCell"/>
</dbReference>
<dbReference type="GO" id="GO:0010181">
    <property type="term" value="F:FMN binding"/>
    <property type="evidence" value="ECO:0007669"/>
    <property type="project" value="UniProtKB-UniRule"/>
</dbReference>
<dbReference type="GO" id="GO:0004452">
    <property type="term" value="F:isopentenyl-diphosphate delta-isomerase activity"/>
    <property type="evidence" value="ECO:0007669"/>
    <property type="project" value="UniProtKB-UniRule"/>
</dbReference>
<dbReference type="GO" id="GO:0000287">
    <property type="term" value="F:magnesium ion binding"/>
    <property type="evidence" value="ECO:0007669"/>
    <property type="project" value="UniProtKB-UniRule"/>
</dbReference>
<dbReference type="GO" id="GO:0070402">
    <property type="term" value="F:NADPH binding"/>
    <property type="evidence" value="ECO:0007669"/>
    <property type="project" value="UniProtKB-UniRule"/>
</dbReference>
<dbReference type="GO" id="GO:0016491">
    <property type="term" value="F:oxidoreductase activity"/>
    <property type="evidence" value="ECO:0007669"/>
    <property type="project" value="InterPro"/>
</dbReference>
<dbReference type="GO" id="GO:0008299">
    <property type="term" value="P:isoprenoid biosynthetic process"/>
    <property type="evidence" value="ECO:0007669"/>
    <property type="project" value="UniProtKB-UniRule"/>
</dbReference>
<dbReference type="CDD" id="cd02811">
    <property type="entry name" value="IDI-2_FMN"/>
    <property type="match status" value="1"/>
</dbReference>
<dbReference type="FunFam" id="3.20.20.70:FF:000283">
    <property type="entry name" value="Isopentenyl-diphosphate delta-isomerase"/>
    <property type="match status" value="1"/>
</dbReference>
<dbReference type="Gene3D" id="3.20.20.70">
    <property type="entry name" value="Aldolase class I"/>
    <property type="match status" value="1"/>
</dbReference>
<dbReference type="HAMAP" id="MF_00354">
    <property type="entry name" value="Idi_2"/>
    <property type="match status" value="1"/>
</dbReference>
<dbReference type="InterPro" id="IPR013785">
    <property type="entry name" value="Aldolase_TIM"/>
</dbReference>
<dbReference type="InterPro" id="IPR000262">
    <property type="entry name" value="FMN-dep_DH"/>
</dbReference>
<dbReference type="InterPro" id="IPR011179">
    <property type="entry name" value="IPdP_isomerase"/>
</dbReference>
<dbReference type="NCBIfam" id="TIGR02151">
    <property type="entry name" value="IPP_isom_2"/>
    <property type="match status" value="1"/>
</dbReference>
<dbReference type="PANTHER" id="PTHR43665">
    <property type="entry name" value="ISOPENTENYL-DIPHOSPHATE DELTA-ISOMERASE"/>
    <property type="match status" value="1"/>
</dbReference>
<dbReference type="PANTHER" id="PTHR43665:SF1">
    <property type="entry name" value="ISOPENTENYL-DIPHOSPHATE DELTA-ISOMERASE"/>
    <property type="match status" value="1"/>
</dbReference>
<dbReference type="Pfam" id="PF01070">
    <property type="entry name" value="FMN_dh"/>
    <property type="match status" value="1"/>
</dbReference>
<dbReference type="PIRSF" id="PIRSF003314">
    <property type="entry name" value="IPP_isomerase"/>
    <property type="match status" value="1"/>
</dbReference>
<dbReference type="SUPFAM" id="SSF51395">
    <property type="entry name" value="FMN-linked oxidoreductases"/>
    <property type="match status" value="1"/>
</dbReference>
<accession>C1L2T9</accession>
<feature type="chain" id="PRO_1000205350" description="Isopentenyl-diphosphate delta-isomerase">
    <location>
        <begin position="1"/>
        <end position="358"/>
    </location>
</feature>
<feature type="binding site" evidence="1">
    <location>
        <begin position="12"/>
        <end position="13"/>
    </location>
    <ligand>
        <name>substrate</name>
    </ligand>
</feature>
<feature type="binding site" evidence="1">
    <location>
        <begin position="69"/>
        <end position="71"/>
    </location>
    <ligand>
        <name>FMN</name>
        <dbReference type="ChEBI" id="CHEBI:58210"/>
    </ligand>
</feature>
<feature type="binding site" evidence="1">
    <location>
        <position position="99"/>
    </location>
    <ligand>
        <name>FMN</name>
        <dbReference type="ChEBI" id="CHEBI:58210"/>
    </ligand>
</feature>
<feature type="binding site" evidence="1">
    <location>
        <position position="128"/>
    </location>
    <ligand>
        <name>FMN</name>
        <dbReference type="ChEBI" id="CHEBI:58210"/>
    </ligand>
</feature>
<feature type="binding site" evidence="1">
    <location>
        <position position="158"/>
    </location>
    <ligand>
        <name>substrate</name>
    </ligand>
</feature>
<feature type="binding site" evidence="1">
    <location>
        <position position="159"/>
    </location>
    <ligand>
        <name>Mg(2+)</name>
        <dbReference type="ChEBI" id="CHEBI:18420"/>
    </ligand>
</feature>
<feature type="binding site" evidence="1">
    <location>
        <position position="190"/>
    </location>
    <ligand>
        <name>FMN</name>
        <dbReference type="ChEBI" id="CHEBI:58210"/>
    </ligand>
</feature>
<feature type="binding site" evidence="1">
    <location>
        <position position="220"/>
    </location>
    <ligand>
        <name>FMN</name>
        <dbReference type="ChEBI" id="CHEBI:58210"/>
    </ligand>
</feature>
<feature type="binding site" evidence="1">
    <location>
        <begin position="267"/>
        <end position="269"/>
    </location>
    <ligand>
        <name>FMN</name>
        <dbReference type="ChEBI" id="CHEBI:58210"/>
    </ligand>
</feature>
<feature type="binding site" evidence="1">
    <location>
        <begin position="288"/>
        <end position="289"/>
    </location>
    <ligand>
        <name>FMN</name>
        <dbReference type="ChEBI" id="CHEBI:58210"/>
    </ligand>
</feature>
<proteinExistence type="inferred from homology"/>